<feature type="chain" id="PRO_0000226795" description="JmjC domain-containing histone demethylation protein 1">
    <location>
        <begin position="1"/>
        <end position="860"/>
    </location>
</feature>
<feature type="domain" description="JmjC" evidence="4">
    <location>
        <begin position="416"/>
        <end position="579"/>
    </location>
</feature>
<feature type="zinc finger region" description="PHD-type" evidence="3">
    <location>
        <begin position="23"/>
        <end position="116"/>
    </location>
</feature>
<feature type="region of interest" description="Disordered" evidence="5">
    <location>
        <begin position="1"/>
        <end position="45"/>
    </location>
</feature>
<feature type="region of interest" description="Disordered" evidence="5">
    <location>
        <begin position="117"/>
        <end position="212"/>
    </location>
</feature>
<feature type="region of interest" description="Disordered" evidence="5">
    <location>
        <begin position="408"/>
        <end position="440"/>
    </location>
</feature>
<feature type="region of interest" description="Disordered" evidence="5">
    <location>
        <begin position="744"/>
        <end position="795"/>
    </location>
</feature>
<feature type="region of interest" description="Disordered" evidence="5">
    <location>
        <begin position="837"/>
        <end position="860"/>
    </location>
</feature>
<feature type="compositionally biased region" description="Basic and acidic residues" evidence="5">
    <location>
        <begin position="183"/>
        <end position="192"/>
    </location>
</feature>
<feature type="compositionally biased region" description="Basic and acidic residues" evidence="5">
    <location>
        <begin position="408"/>
        <end position="433"/>
    </location>
</feature>
<feature type="compositionally biased region" description="Polar residues" evidence="5">
    <location>
        <begin position="750"/>
        <end position="763"/>
    </location>
</feature>
<feature type="compositionally biased region" description="Low complexity" evidence="5">
    <location>
        <begin position="767"/>
        <end position="795"/>
    </location>
</feature>
<feature type="binding site" evidence="1">
    <location>
        <position position="471"/>
    </location>
    <ligand>
        <name>substrate</name>
    </ligand>
</feature>
<feature type="binding site" evidence="4">
    <location>
        <position position="474"/>
    </location>
    <ligand>
        <name>Fe cation</name>
        <dbReference type="ChEBI" id="CHEBI:24875"/>
        <note>catalytic</note>
    </ligand>
</feature>
<feature type="binding site" evidence="4">
    <location>
        <position position="476"/>
    </location>
    <ligand>
        <name>Fe cation</name>
        <dbReference type="ChEBI" id="CHEBI:24875"/>
        <note>catalytic</note>
    </ligand>
</feature>
<feature type="binding site" evidence="1">
    <location>
        <position position="491"/>
    </location>
    <ligand>
        <name>substrate</name>
    </ligand>
</feature>
<feature type="binding site" evidence="4">
    <location>
        <position position="547"/>
    </location>
    <ligand>
        <name>Fe cation</name>
        <dbReference type="ChEBI" id="CHEBI:24875"/>
        <note>catalytic</note>
    </ligand>
</feature>
<accession>P0CO40</accession>
<accession>Q55NZ6</accession>
<accession>Q5KEG2</accession>
<comment type="function">
    <text evidence="2">Histone demethylase that specifically demethylates 'Lys-36' of histone H3, thereby playing a central role in histone code.</text>
</comment>
<comment type="catalytic activity">
    <reaction evidence="2">
        <text>N(6),N(6)-dimethyl-L-lysyl(36)-[histone H3] + 2 2-oxoglutarate + 2 O2 = L-lysyl(36)-[histone H3] + 2 formaldehyde + 2 succinate + 2 CO2</text>
        <dbReference type="Rhea" id="RHEA:42032"/>
        <dbReference type="Rhea" id="RHEA-COMP:9785"/>
        <dbReference type="Rhea" id="RHEA-COMP:9787"/>
        <dbReference type="ChEBI" id="CHEBI:15379"/>
        <dbReference type="ChEBI" id="CHEBI:16526"/>
        <dbReference type="ChEBI" id="CHEBI:16810"/>
        <dbReference type="ChEBI" id="CHEBI:16842"/>
        <dbReference type="ChEBI" id="CHEBI:29969"/>
        <dbReference type="ChEBI" id="CHEBI:30031"/>
        <dbReference type="ChEBI" id="CHEBI:61976"/>
        <dbReference type="EC" id="1.14.11.27"/>
    </reaction>
</comment>
<comment type="cofactor">
    <cofactor evidence="1">
        <name>Fe(2+)</name>
        <dbReference type="ChEBI" id="CHEBI:29033"/>
    </cofactor>
    <text evidence="1">Binds 1 Fe(2+) ion per subunit.</text>
</comment>
<comment type="subcellular location">
    <subcellularLocation>
        <location evidence="1">Nucleus</location>
    </subcellularLocation>
</comment>
<comment type="domain">
    <text evidence="1">The JmjC domain mediates the demethylation activity.</text>
</comment>
<comment type="similarity">
    <text evidence="6">Belongs to the JHDM1 histone demethylase family.</text>
</comment>
<reference key="1">
    <citation type="journal article" date="2005" name="Science">
        <title>The genome of the basidiomycetous yeast and human pathogen Cryptococcus neoformans.</title>
        <authorList>
            <person name="Loftus B.J."/>
            <person name="Fung E."/>
            <person name="Roncaglia P."/>
            <person name="Rowley D."/>
            <person name="Amedeo P."/>
            <person name="Bruno D."/>
            <person name="Vamathevan J."/>
            <person name="Miranda M."/>
            <person name="Anderson I.J."/>
            <person name="Fraser J.A."/>
            <person name="Allen J.E."/>
            <person name="Bosdet I.E."/>
            <person name="Brent M.R."/>
            <person name="Chiu R."/>
            <person name="Doering T.L."/>
            <person name="Donlin M.J."/>
            <person name="D'Souza C.A."/>
            <person name="Fox D.S."/>
            <person name="Grinberg V."/>
            <person name="Fu J."/>
            <person name="Fukushima M."/>
            <person name="Haas B.J."/>
            <person name="Huang J.C."/>
            <person name="Janbon G."/>
            <person name="Jones S.J.M."/>
            <person name="Koo H.L."/>
            <person name="Krzywinski M.I."/>
            <person name="Kwon-Chung K.J."/>
            <person name="Lengeler K.B."/>
            <person name="Maiti R."/>
            <person name="Marra M.A."/>
            <person name="Marra R.E."/>
            <person name="Mathewson C.A."/>
            <person name="Mitchell T.G."/>
            <person name="Pertea M."/>
            <person name="Riggs F.R."/>
            <person name="Salzberg S.L."/>
            <person name="Schein J.E."/>
            <person name="Shvartsbeyn A."/>
            <person name="Shin H."/>
            <person name="Shumway M."/>
            <person name="Specht C.A."/>
            <person name="Suh B.B."/>
            <person name="Tenney A."/>
            <person name="Utterback T.R."/>
            <person name="Wickes B.L."/>
            <person name="Wortman J.R."/>
            <person name="Wye N.H."/>
            <person name="Kronstad J.W."/>
            <person name="Lodge J.K."/>
            <person name="Heitman J."/>
            <person name="Davis R.W."/>
            <person name="Fraser C.M."/>
            <person name="Hyman R.W."/>
        </authorList>
    </citation>
    <scope>NUCLEOTIDE SEQUENCE [LARGE SCALE GENOMIC DNA]</scope>
    <source>
        <strain>JEC21 / ATCC MYA-565</strain>
    </source>
</reference>
<proteinExistence type="inferred from homology"/>
<name>JHD1_CRYNJ</name>
<protein>
    <recommendedName>
        <fullName>JmjC domain-containing histone demethylation protein 1</fullName>
        <ecNumber evidence="2">1.14.11.27</ecNumber>
    </recommendedName>
    <alternativeName>
        <fullName>[Histone-H3]-lysine-36 demethylase 1</fullName>
    </alternativeName>
</protein>
<gene>
    <name type="primary">JHD1</name>
    <name type="ordered locus">CNG00620</name>
</gene>
<organism>
    <name type="scientific">Cryptococcus neoformans var. neoformans serotype D (strain JEC21 / ATCC MYA-565)</name>
    <name type="common">Filobasidiella neoformans</name>
    <dbReference type="NCBI Taxonomy" id="214684"/>
    <lineage>
        <taxon>Eukaryota</taxon>
        <taxon>Fungi</taxon>
        <taxon>Dikarya</taxon>
        <taxon>Basidiomycota</taxon>
        <taxon>Agaricomycotina</taxon>
        <taxon>Tremellomycetes</taxon>
        <taxon>Tremellales</taxon>
        <taxon>Cryptococcaceae</taxon>
        <taxon>Cryptococcus</taxon>
        <taxon>Cryptococcus neoformans species complex</taxon>
    </lineage>
</organism>
<keyword id="KW-0156">Chromatin regulator</keyword>
<keyword id="KW-0223">Dioxygenase</keyword>
<keyword id="KW-0408">Iron</keyword>
<keyword id="KW-0479">Metal-binding</keyword>
<keyword id="KW-0539">Nucleus</keyword>
<keyword id="KW-0560">Oxidoreductase</keyword>
<keyword id="KW-1185">Reference proteome</keyword>
<keyword id="KW-0804">Transcription</keyword>
<keyword id="KW-0805">Transcription regulation</keyword>
<keyword id="KW-0862">Zinc</keyword>
<keyword id="KW-0863">Zinc-finger</keyword>
<dbReference type="EC" id="1.14.11.27" evidence="2"/>
<dbReference type="EMBL" id="AE017347">
    <property type="protein sequence ID" value="AAW44468.2"/>
    <property type="molecule type" value="Genomic_DNA"/>
</dbReference>
<dbReference type="RefSeq" id="XP_571775.1">
    <property type="nucleotide sequence ID" value="XM_571775.1"/>
</dbReference>
<dbReference type="SMR" id="P0CO40"/>
<dbReference type="STRING" id="214684.P0CO40"/>
<dbReference type="PaxDb" id="214684-P0CO40"/>
<dbReference type="eggNOG" id="KOG1633">
    <property type="taxonomic scope" value="Eukaryota"/>
</dbReference>
<dbReference type="InParanoid" id="P0CO40"/>
<dbReference type="Proteomes" id="UP000002149">
    <property type="component" value="Chromosome 7"/>
</dbReference>
<dbReference type="GO" id="GO:0005634">
    <property type="term" value="C:nucleus"/>
    <property type="evidence" value="ECO:0007669"/>
    <property type="project" value="UniProtKB-SubCell"/>
</dbReference>
<dbReference type="GO" id="GO:0032452">
    <property type="term" value="F:histone demethylase activity"/>
    <property type="evidence" value="ECO:0000318"/>
    <property type="project" value="GO_Central"/>
</dbReference>
<dbReference type="GO" id="GO:0140680">
    <property type="term" value="F:histone H3K36me/H3K36me2 demethylase activity"/>
    <property type="evidence" value="ECO:0007669"/>
    <property type="project" value="UniProtKB-EC"/>
</dbReference>
<dbReference type="GO" id="GO:0003712">
    <property type="term" value="F:transcription coregulator activity"/>
    <property type="evidence" value="ECO:0000318"/>
    <property type="project" value="GO_Central"/>
</dbReference>
<dbReference type="GO" id="GO:0008270">
    <property type="term" value="F:zinc ion binding"/>
    <property type="evidence" value="ECO:0007669"/>
    <property type="project" value="UniProtKB-KW"/>
</dbReference>
<dbReference type="GO" id="GO:0006338">
    <property type="term" value="P:chromatin remodeling"/>
    <property type="evidence" value="ECO:0000318"/>
    <property type="project" value="GO_Central"/>
</dbReference>
<dbReference type="GO" id="GO:0006357">
    <property type="term" value="P:regulation of transcription by RNA polymerase II"/>
    <property type="evidence" value="ECO:0000318"/>
    <property type="project" value="GO_Central"/>
</dbReference>
<dbReference type="Gene3D" id="2.60.120.650">
    <property type="entry name" value="Cupin"/>
    <property type="match status" value="1"/>
</dbReference>
<dbReference type="Gene3D" id="3.30.40.10">
    <property type="entry name" value="Zinc/RING finger domain, C3HC4 (zinc finger)"/>
    <property type="match status" value="1"/>
</dbReference>
<dbReference type="InterPro" id="IPR041070">
    <property type="entry name" value="JHD"/>
</dbReference>
<dbReference type="InterPro" id="IPR050690">
    <property type="entry name" value="JHDM1_Histone_Demethylase"/>
</dbReference>
<dbReference type="InterPro" id="IPR003347">
    <property type="entry name" value="JmjC_dom"/>
</dbReference>
<dbReference type="InterPro" id="IPR019786">
    <property type="entry name" value="Zinc_finger_PHD-type_CS"/>
</dbReference>
<dbReference type="InterPro" id="IPR011011">
    <property type="entry name" value="Znf_FYVE_PHD"/>
</dbReference>
<dbReference type="InterPro" id="IPR001965">
    <property type="entry name" value="Znf_PHD"/>
</dbReference>
<dbReference type="InterPro" id="IPR013083">
    <property type="entry name" value="Znf_RING/FYVE/PHD"/>
</dbReference>
<dbReference type="PANTHER" id="PTHR23123">
    <property type="entry name" value="PHD/F-BOX CONTAINING PROTEIN"/>
    <property type="match status" value="1"/>
</dbReference>
<dbReference type="Pfam" id="PF17811">
    <property type="entry name" value="JHD"/>
    <property type="match status" value="1"/>
</dbReference>
<dbReference type="Pfam" id="PF02373">
    <property type="entry name" value="JmjC"/>
    <property type="match status" value="1"/>
</dbReference>
<dbReference type="SMART" id="SM00558">
    <property type="entry name" value="JmjC"/>
    <property type="match status" value="1"/>
</dbReference>
<dbReference type="SMART" id="SM00249">
    <property type="entry name" value="PHD"/>
    <property type="match status" value="1"/>
</dbReference>
<dbReference type="SUPFAM" id="SSF51197">
    <property type="entry name" value="Clavaminate synthase-like"/>
    <property type="match status" value="1"/>
</dbReference>
<dbReference type="SUPFAM" id="SSF57903">
    <property type="entry name" value="FYVE/PHD zinc finger"/>
    <property type="match status" value="1"/>
</dbReference>
<dbReference type="PROSITE" id="PS51184">
    <property type="entry name" value="JMJC"/>
    <property type="match status" value="1"/>
</dbReference>
<dbReference type="PROSITE" id="PS01359">
    <property type="entry name" value="ZF_PHD_1"/>
    <property type="match status" value="1"/>
</dbReference>
<evidence type="ECO:0000250" key="1"/>
<evidence type="ECO:0000250" key="2">
    <source>
        <dbReference type="UniProtKB" id="P40034"/>
    </source>
</evidence>
<evidence type="ECO:0000255" key="3">
    <source>
        <dbReference type="PROSITE-ProRule" id="PRU00146"/>
    </source>
</evidence>
<evidence type="ECO:0000255" key="4">
    <source>
        <dbReference type="PROSITE-ProRule" id="PRU00538"/>
    </source>
</evidence>
<evidence type="ECO:0000256" key="5">
    <source>
        <dbReference type="SAM" id="MobiDB-lite"/>
    </source>
</evidence>
<evidence type="ECO:0000305" key="6"/>
<sequence length="860" mass="96167">MSEQVGQREAVDSPQATGVKTPPEPCPLCRETGPPQPPSITEEGKTNEDIDFIWVACNKCDEWYHSACLFLGDEKWRGTIPKEIISTVETNFGDEGAWTNWVEWIGKWYCAPCLARSTSPSNPRPPRHPLVATMKRASIQPKDIDQAGKPLKRSASTSAPLLKSNIKRPRTSTKGQETASPEIDMKSEREQQAESTAGTPASDAPQGRPKRKTAQIDYRNLNNSIATPTHQWLELIADPEKYGRTILDANYPALPGKLLTRAWLESQPLPGQPSSISPDLLPTRFWGPDREPLIVRPENGGFSSLGGHLPSKDLTVQDVANLVGPDRMVDVIDVSSQHSSQWTLQKWAEYIQSSSGNTSVRNPKVYNVISLEISGTELAKKVKPPKIVREIDWVDNFWRFNAGAGGKDVKEKGRGNDSREGSEIRKEGSHLTEGDNGGEIEEDLEGLKEKTNTPYPKVQLYCLMGMKGAWTDWHVDFAASSVYYTIHSGAKVFFFVKPTEQNLKAYAEWSGSYEKQQDTWLGDMVDEVRKVELHAGDTMIIPTGYIHAVYTPMDSIVFGGNFLHSYNVDTQLRLRQIEIDTKVPQRFRFPMFDRLCWYVAEKYCSDLRHLRAYRPRATTTPKPPHFRVLQCLSYLANFLVSQTGILEDPEAEDKARKLVHDRIPGDIVKDPEGLAKELKWRVERELGALGLLGEEASGVEAEEFKSNGTANGSVKIKGKEVSRKRDRLSKVFDKKAISRTWDFHPPAWSENRQSPQIETTTVQLPRPSTSSSDAISGSGPGASPGASANGGANENEQAELTTMLVKQTRKRMRELDDGTVIEESQETTFVEKKTIWGPKLDKEKISQPQGKVEEDMDIDH</sequence>